<accession>P83607</accession>
<evidence type="ECO:0000250" key="1"/>
<evidence type="ECO:0000255" key="2">
    <source>
        <dbReference type="PROSITE-ProRule" id="PRU00031"/>
    </source>
</evidence>
<evidence type="ECO:0000269" key="3">
    <source>
    </source>
</evidence>
<keyword id="KW-0903">Direct protein sequencing</keyword>
<keyword id="KW-0646">Protease inhibitor</keyword>
<keyword id="KW-0964">Secreted</keyword>
<keyword id="KW-0722">Serine protease inhibitor</keyword>
<feature type="chain" id="PRO_0000155455" description="Kunitz-type serine protease inhibitor D">
    <location>
        <begin position="1"/>
        <end position="17" status="greater than"/>
    </location>
</feature>
<feature type="domain" description="BPTI/Kunitz inhibitor" evidence="2">
    <location>
        <begin position="1"/>
        <end position="17" status="greater than"/>
    </location>
</feature>
<feature type="site" description="Reactive bond" evidence="1">
    <location>
        <begin position="16"/>
        <end position="17"/>
    </location>
</feature>
<feature type="non-terminal residue">
    <location>
        <position position="17"/>
    </location>
</feature>
<sequence>AVDFSKVPTATAGPCKG</sequence>
<name>BMTID_RHIMP</name>
<organism>
    <name type="scientific">Rhipicephalus microplus</name>
    <name type="common">Cattle tick</name>
    <name type="synonym">Boophilus microplus</name>
    <dbReference type="NCBI Taxonomy" id="6941"/>
    <lineage>
        <taxon>Eukaryota</taxon>
        <taxon>Metazoa</taxon>
        <taxon>Ecdysozoa</taxon>
        <taxon>Arthropoda</taxon>
        <taxon>Chelicerata</taxon>
        <taxon>Arachnida</taxon>
        <taxon>Acari</taxon>
        <taxon>Parasitiformes</taxon>
        <taxon>Ixodida</taxon>
        <taxon>Ixodoidea</taxon>
        <taxon>Ixodidae</taxon>
        <taxon>Rhipicephalinae</taxon>
        <taxon>Rhipicephalus</taxon>
        <taxon>Boophilus</taxon>
    </lineage>
</organism>
<protein>
    <recommendedName>
        <fullName>Kunitz-type serine protease inhibitor D</fullName>
        <shortName>BmTI-D</shortName>
    </recommendedName>
</protein>
<proteinExistence type="evidence at protein level"/>
<dbReference type="GO" id="GO:0005576">
    <property type="term" value="C:extracellular region"/>
    <property type="evidence" value="ECO:0007669"/>
    <property type="project" value="UniProtKB-SubCell"/>
</dbReference>
<dbReference type="GO" id="GO:0004867">
    <property type="term" value="F:serine-type endopeptidase inhibitor activity"/>
    <property type="evidence" value="ECO:0007669"/>
    <property type="project" value="UniProtKB-KW"/>
</dbReference>
<reference key="1">
    <citation type="journal article" date="2004" name="Biochimie">
        <title>Boophilus microplus tick larvae, a rich source of Kunitz type serine proteinase inhibitors.</title>
        <authorList>
            <person name="Sasaki S.D."/>
            <person name="Azzolini S.S."/>
            <person name="Hirata I.Y."/>
            <person name="Andreotti R."/>
            <person name="Tanaka A.S."/>
        </authorList>
    </citation>
    <scope>PROTEIN SEQUENCE</scope>
    <scope>FUNCTION</scope>
    <source>
        <tissue>Larva</tissue>
    </source>
</reference>
<comment type="function">
    <text evidence="3">Inhibits bovine trypsin and human plasma kallikrein, but not human neutrophil elastase.</text>
</comment>
<comment type="subcellular location">
    <subcellularLocation>
        <location>Secreted</location>
    </subcellularLocation>
</comment>